<evidence type="ECO:0000255" key="1">
    <source>
        <dbReference type="HAMAP-Rule" id="MF_04002"/>
    </source>
</evidence>
<evidence type="ECO:0000256" key="2">
    <source>
        <dbReference type="SAM" id="MobiDB-lite"/>
    </source>
</evidence>
<protein>
    <recommendedName>
        <fullName evidence="1">Major capsid protein L1</fullName>
    </recommendedName>
</protein>
<name>VL1_HPV30</name>
<gene>
    <name evidence="1" type="primary">L1</name>
</gene>
<organismHost>
    <name type="scientific">Homo sapiens</name>
    <name type="common">Human</name>
    <dbReference type="NCBI Taxonomy" id="9606"/>
</organismHost>
<accession>Q02515</accession>
<proteinExistence type="inferred from homology"/>
<feature type="chain" id="PRO_0000133514" description="Major capsid protein L1">
    <location>
        <begin position="1"/>
        <end position="508"/>
    </location>
</feature>
<feature type="region of interest" description="Disordered" evidence="2">
    <location>
        <begin position="481"/>
        <end position="508"/>
    </location>
</feature>
<feature type="compositionally biased region" description="Low complexity" evidence="2">
    <location>
        <begin position="481"/>
        <end position="502"/>
    </location>
</feature>
<feature type="disulfide bond" description="Interchain (with C-434)" evidence="1">
    <location>
        <position position="182"/>
    </location>
</feature>
<feature type="disulfide bond" description="Interchain (with C-182)" evidence="1">
    <location>
        <position position="434"/>
    </location>
</feature>
<comment type="function">
    <text evidence="1">Forms an icosahedral capsid with a T=7 symmetry and a 50 nm diameter. The capsid is composed of 72 pentamers linked to each other by disulfide bonds and associated with L2 proteins. Binds to heparan sulfate proteoglycans on cell surface of basal layer keratinocytes to provide initial virion attachment. This binding mediates a conformational change in the virus capsid that facilitates efficient infection. The virion enters the host cell via endocytosis. During virus trafficking, L1 protein dissociates from the viral DNA and the genomic DNA is released to the host nucleus. The virion assembly takes place within the cell nucleus. Encapsulates the genomic DNA together with protein L2.</text>
</comment>
<comment type="subunit">
    <text evidence="1">Self-assembles into homopentamers. The capsid has an icosahedral symmetry and consists of 72 capsomers, with each capsomer being a pentamer of L1. Interacts with the minor capsid protein L2; this interaction is necessary for viral genome encapsidation. Interacts with protein E2; this interaction enhances E2-dependent replication and transcription activation.</text>
</comment>
<comment type="subcellular location">
    <subcellularLocation>
        <location evidence="1">Virion</location>
    </subcellularLocation>
    <subcellularLocation>
        <location evidence="1">Host nucleus</location>
    </subcellularLocation>
</comment>
<comment type="similarity">
    <text evidence="1">Belongs to the papillomaviridae L1 protein family.</text>
</comment>
<dbReference type="EMBL" id="X74474">
    <property type="protein sequence ID" value="CAA52548.1"/>
    <property type="molecule type" value="Genomic_DNA"/>
</dbReference>
<dbReference type="EMBL" id="M96279">
    <property type="protein sequence ID" value="AAA47018.1"/>
    <property type="molecule type" value="Genomic_DNA"/>
</dbReference>
<dbReference type="PIR" id="S36508">
    <property type="entry name" value="S36508"/>
</dbReference>
<dbReference type="RefSeq" id="YP_009508159.1">
    <property type="nucleotide sequence ID" value="NC_038889.1"/>
</dbReference>
<dbReference type="SMR" id="Q02515"/>
<dbReference type="GeneID" id="37619472"/>
<dbReference type="OrthoDB" id="5037at10239"/>
<dbReference type="Proteomes" id="UP000009155">
    <property type="component" value="Genome"/>
</dbReference>
<dbReference type="GO" id="GO:0042025">
    <property type="term" value="C:host cell nucleus"/>
    <property type="evidence" value="ECO:0007669"/>
    <property type="project" value="UniProtKB-SubCell"/>
</dbReference>
<dbReference type="GO" id="GO:0039620">
    <property type="term" value="C:T=7 icosahedral viral capsid"/>
    <property type="evidence" value="ECO:0007669"/>
    <property type="project" value="UniProtKB-UniRule"/>
</dbReference>
<dbReference type="GO" id="GO:0005198">
    <property type="term" value="F:structural molecule activity"/>
    <property type="evidence" value="ECO:0007669"/>
    <property type="project" value="UniProtKB-UniRule"/>
</dbReference>
<dbReference type="GO" id="GO:0075509">
    <property type="term" value="P:endocytosis involved in viral entry into host cell"/>
    <property type="evidence" value="ECO:0007669"/>
    <property type="project" value="UniProtKB-KW"/>
</dbReference>
<dbReference type="GO" id="GO:0019062">
    <property type="term" value="P:virion attachment to host cell"/>
    <property type="evidence" value="ECO:0007669"/>
    <property type="project" value="UniProtKB-UniRule"/>
</dbReference>
<dbReference type="Gene3D" id="2.60.175.20">
    <property type="entry name" value="Major capsid L1 (late) superfamily, Papillomavirus"/>
    <property type="match status" value="2"/>
</dbReference>
<dbReference type="HAMAP" id="MF_04002">
    <property type="entry name" value="PPV_L1"/>
    <property type="match status" value="1"/>
</dbReference>
<dbReference type="InterPro" id="IPR002210">
    <property type="entry name" value="Capsid_L1_Papillomavir"/>
</dbReference>
<dbReference type="InterPro" id="IPR036973">
    <property type="entry name" value="Capsid_L1_sf_Papillomavir"/>
</dbReference>
<dbReference type="InterPro" id="IPR011222">
    <property type="entry name" value="dsDNA_vir_gr_I_capsid"/>
</dbReference>
<dbReference type="Pfam" id="PF00500">
    <property type="entry name" value="Late_protein_L1"/>
    <property type="match status" value="1"/>
</dbReference>
<dbReference type="PRINTS" id="PR00865">
    <property type="entry name" value="HPVCAPSIDL1"/>
</dbReference>
<dbReference type="SUPFAM" id="SSF88648">
    <property type="entry name" value="Group I dsDNA viruses"/>
    <property type="match status" value="1"/>
</dbReference>
<sequence>MFPIFLQMAVWRPSETKVYLPPTPVSKVVPTDAYVKRTNIFYHAGSSRLLAVGHPYYSISKAGNSKTDVPKVSAFQYRVFRVRLPDPNKFGLPDTNVFNPEQERLVWACVGLEIGRGQPLGVGVSGNPLFNKLDDTESSTIANQDTAEDSRDNISVDPKQTQLCIIGCTPAIGEHWAKGTACRSAPPAQGDCPPLELVNSPIQDGDMVDIGFGAMDFKTLQESKSDVPLDISQSTCKYPDYLKMSADAYGDSMWFYLRREQLFARHYFNRAGAIGEQLPSTLYIKGTNNRDPPPSSVYVATPSGSMVTSEAQLFNKPYWLQRAQGHNNGICWGNQVFVTVVDTTRNTNMTISATTQTLSTYNSSQIKQYVRHVEEYELQFVFQLCKISLSAETMAYLHTMNSTLLEGWNIGLSPPAATSLEDKYRYVKSLAITCQKDQPPAEKEDPLAKYKFWDVNLQDSFSADLDQFPLGRKFLMQLGVRTKPSTTTKKRSAPSSSTSTPSAKRKRR</sequence>
<keyword id="KW-0167">Capsid protein</keyword>
<keyword id="KW-1015">Disulfide bond</keyword>
<keyword id="KW-1048">Host nucleus</keyword>
<keyword id="KW-0945">Host-virus interaction</keyword>
<keyword id="KW-0426">Late protein</keyword>
<keyword id="KW-1185">Reference proteome</keyword>
<keyword id="KW-1145">T=7 icosahedral capsid protein</keyword>
<keyword id="KW-1161">Viral attachment to host cell</keyword>
<keyword id="KW-1162">Viral penetration into host cytoplasm</keyword>
<keyword id="KW-0946">Virion</keyword>
<keyword id="KW-1164">Virus endocytosis by host</keyword>
<keyword id="KW-1160">Virus entry into host cell</keyword>
<organism>
    <name type="scientific">Human papillomavirus 30</name>
    <dbReference type="NCBI Taxonomy" id="10611"/>
    <lineage>
        <taxon>Viruses</taxon>
        <taxon>Monodnaviria</taxon>
        <taxon>Shotokuvirae</taxon>
        <taxon>Cossaviricota</taxon>
        <taxon>Papovaviricetes</taxon>
        <taxon>Zurhausenvirales</taxon>
        <taxon>Papillomaviridae</taxon>
        <taxon>Firstpapillomavirinae</taxon>
        <taxon>Alphapapillomavirus</taxon>
        <taxon>Alphapapillomavirus 6</taxon>
    </lineage>
</organism>
<reference key="1">
    <citation type="journal article" date="1994" name="Curr. Top. Microbiol. Immunol.">
        <title>Primer-directed sequencing of human papillomavirus types.</title>
        <authorList>
            <person name="Delius H."/>
            <person name="Hofmann B."/>
        </authorList>
    </citation>
    <scope>NUCLEOTIDE SEQUENCE [GENOMIC DNA]</scope>
</reference>
<reference key="2">
    <citation type="journal article" date="1992" name="J. Virol.">
        <title>Phylogenetic analysis of 48 papillomavirus types and 28 subtypes and variants: a showcase for the molecular evolution of DNA viruses.</title>
        <authorList>
            <person name="Chan S.-Y."/>
            <person name="Bernard H.U."/>
            <person name="Ong C.K."/>
            <person name="Chan S.P."/>
            <person name="Birgit H."/>
            <person name="Delius H."/>
        </authorList>
    </citation>
    <scope>NUCLEOTIDE SEQUENCE [GENOMIC DNA] OF 309-352</scope>
</reference>